<name>K1C20_PIG</name>
<sequence length="107" mass="12528">GNLWVGNEKMTMKNLNDRLASYLEKVRSLEQSNSKFELQIKQWYESNTPGISRDHSAYLQQIQDLRNQIRDAQLQNARCVLQIDNAKLAAEDFRLKYETERGIRLAV</sequence>
<dbReference type="EMBL" id="F14805">
    <property type="protein sequence ID" value="CAA23268.1"/>
    <property type="molecule type" value="mRNA"/>
</dbReference>
<dbReference type="SMR" id="Q29218"/>
<dbReference type="STRING" id="9823.ENSSSCP00000066131"/>
<dbReference type="PaxDb" id="9823-ENSSSCP00000018502"/>
<dbReference type="PeptideAtlas" id="Q29218"/>
<dbReference type="eggNOG" id="ENOG502QUY3">
    <property type="taxonomic scope" value="Eukaryota"/>
</dbReference>
<dbReference type="HOGENOM" id="CLU_012560_8_1_1"/>
<dbReference type="InParanoid" id="Q29218"/>
<dbReference type="ChiTaRS" id="KRT20">
    <property type="organism name" value="pig"/>
</dbReference>
<dbReference type="Proteomes" id="UP000008227">
    <property type="component" value="Unplaced"/>
</dbReference>
<dbReference type="Proteomes" id="UP000314985">
    <property type="component" value="Unplaced"/>
</dbReference>
<dbReference type="Proteomes" id="UP000694570">
    <property type="component" value="Unplaced"/>
</dbReference>
<dbReference type="Proteomes" id="UP000694571">
    <property type="component" value="Unplaced"/>
</dbReference>
<dbReference type="Proteomes" id="UP000694720">
    <property type="component" value="Unplaced"/>
</dbReference>
<dbReference type="Proteomes" id="UP000694722">
    <property type="component" value="Unplaced"/>
</dbReference>
<dbReference type="Proteomes" id="UP000694723">
    <property type="component" value="Unplaced"/>
</dbReference>
<dbReference type="Proteomes" id="UP000694724">
    <property type="component" value="Unplaced"/>
</dbReference>
<dbReference type="Proteomes" id="UP000694725">
    <property type="component" value="Unplaced"/>
</dbReference>
<dbReference type="Proteomes" id="UP000694726">
    <property type="component" value="Unplaced"/>
</dbReference>
<dbReference type="Proteomes" id="UP000694727">
    <property type="component" value="Unplaced"/>
</dbReference>
<dbReference type="Proteomes" id="UP000694728">
    <property type="component" value="Unplaced"/>
</dbReference>
<dbReference type="GO" id="GO:0005882">
    <property type="term" value="C:intermediate filament"/>
    <property type="evidence" value="ECO:0007669"/>
    <property type="project" value="UniProtKB-KW"/>
</dbReference>
<dbReference type="GO" id="GO:0005198">
    <property type="term" value="F:structural molecule activity"/>
    <property type="evidence" value="ECO:0007669"/>
    <property type="project" value="InterPro"/>
</dbReference>
<dbReference type="GO" id="GO:0009267">
    <property type="term" value="P:cellular response to starvation"/>
    <property type="evidence" value="ECO:0000250"/>
    <property type="project" value="UniProtKB"/>
</dbReference>
<dbReference type="GO" id="GO:0045109">
    <property type="term" value="P:intermediate filament organization"/>
    <property type="evidence" value="ECO:0000250"/>
    <property type="project" value="UniProtKB"/>
</dbReference>
<dbReference type="GO" id="GO:0050708">
    <property type="term" value="P:regulation of protein secretion"/>
    <property type="evidence" value="ECO:0000250"/>
    <property type="project" value="UniProtKB"/>
</dbReference>
<dbReference type="Gene3D" id="1.20.5.1160">
    <property type="entry name" value="Vasodilator-stimulated phosphoprotein"/>
    <property type="match status" value="1"/>
</dbReference>
<dbReference type="InterPro" id="IPR039008">
    <property type="entry name" value="IF_rod_dom"/>
</dbReference>
<dbReference type="InterPro" id="IPR002957">
    <property type="entry name" value="Keratin_I"/>
</dbReference>
<dbReference type="PANTHER" id="PTHR23239">
    <property type="entry name" value="INTERMEDIATE FILAMENT"/>
    <property type="match status" value="1"/>
</dbReference>
<dbReference type="PANTHER" id="PTHR23239:SF167">
    <property type="entry name" value="KERATIN, TYPE I CYTOSKELETAL 20"/>
    <property type="match status" value="1"/>
</dbReference>
<dbReference type="Pfam" id="PF00038">
    <property type="entry name" value="Filament"/>
    <property type="match status" value="1"/>
</dbReference>
<dbReference type="SUPFAM" id="SSF64593">
    <property type="entry name" value="Intermediate filament protein, coiled coil region"/>
    <property type="match status" value="1"/>
</dbReference>
<dbReference type="PROSITE" id="PS51842">
    <property type="entry name" value="IF_ROD_2"/>
    <property type="match status" value="1"/>
</dbReference>
<protein>
    <recommendedName>
        <fullName>Keratin, type I cytoskeletal 20</fullName>
    </recommendedName>
    <alternativeName>
        <fullName>Cytokeratin-20</fullName>
        <shortName>CK-20</shortName>
    </alternativeName>
    <alternativeName>
        <fullName>Keratin-20</fullName>
        <shortName>K20</shortName>
    </alternativeName>
</protein>
<keyword id="KW-0175">Coiled coil</keyword>
<keyword id="KW-0403">Intermediate filament</keyword>
<keyword id="KW-0416">Keratin</keyword>
<keyword id="KW-1185">Reference proteome</keyword>
<feature type="chain" id="PRO_0000308359" description="Keratin, type I cytoskeletal 20">
    <location>
        <begin position="1" status="less than"/>
        <end position="107" status="greater than"/>
    </location>
</feature>
<feature type="domain" description="IF rod" evidence="4">
    <location>
        <begin position="8"/>
        <end position="107" status="greater than"/>
    </location>
</feature>
<feature type="region of interest" description="Head" evidence="3">
    <location>
        <begin position="1" status="less than"/>
        <end position="7"/>
    </location>
</feature>
<feature type="region of interest" description="Coil 1A" evidence="3">
    <location>
        <begin position="8"/>
        <end position="43"/>
    </location>
</feature>
<feature type="region of interest" description="Linker 1" evidence="3">
    <location>
        <begin position="44"/>
        <end position="61"/>
    </location>
</feature>
<feature type="region of interest" description="Coil 1B" evidence="3">
    <location>
        <begin position="62"/>
        <end position="107" status="greater than"/>
    </location>
</feature>
<feature type="non-terminal residue" evidence="6">
    <location>
        <position position="1"/>
    </location>
</feature>
<feature type="non-terminal residue" evidence="6">
    <location>
        <position position="107"/>
    </location>
</feature>
<gene>
    <name evidence="1" type="primary">KRT20</name>
</gene>
<organism>
    <name type="scientific">Sus scrofa</name>
    <name type="common">Pig</name>
    <dbReference type="NCBI Taxonomy" id="9823"/>
    <lineage>
        <taxon>Eukaryota</taxon>
        <taxon>Metazoa</taxon>
        <taxon>Chordata</taxon>
        <taxon>Craniata</taxon>
        <taxon>Vertebrata</taxon>
        <taxon>Euteleostomi</taxon>
        <taxon>Mammalia</taxon>
        <taxon>Eutheria</taxon>
        <taxon>Laurasiatheria</taxon>
        <taxon>Artiodactyla</taxon>
        <taxon>Suina</taxon>
        <taxon>Suidae</taxon>
        <taxon>Sus</taxon>
    </lineage>
</organism>
<comment type="function">
    <text evidence="2">Plays a significant role in maintaining keratin filament organization in intestinal epithelia. When phosphorylated, plays a role in the secretion of mucin in the small intestine (By similarity).</text>
</comment>
<comment type="subunit">
    <text evidence="1 5">Heterotetramer of two type I and two type II keratins. Associates with KRT8 (By similarity).</text>
</comment>
<comment type="miscellaneous">
    <text evidence="5">There are two types of cytoskeletal and microfibrillar keratin: I (acidic; 40-55 kDa) and II (neutral to basic; 56-70 kDa).</text>
</comment>
<comment type="similarity">
    <text evidence="4">Belongs to the intermediate filament family.</text>
</comment>
<reference evidence="6" key="1">
    <citation type="journal article" date="1996" name="Mamm. Genome">
        <title>Evaluation and characterization of a porcine small intestine cDNA library: analysis of 839 clones.</title>
        <authorList>
            <person name="Winteroe A.K."/>
            <person name="Fredholm M."/>
            <person name="Davies W."/>
        </authorList>
    </citation>
    <scope>NUCLEOTIDE SEQUENCE [LARGE SCALE MRNA]</scope>
    <source>
        <tissue evidence="6">Small intestine</tissue>
    </source>
</reference>
<proteinExistence type="evidence at transcript level"/>
<accession>Q29218</accession>
<evidence type="ECO:0000250" key="1">
    <source>
        <dbReference type="UniProtKB" id="P35900"/>
    </source>
</evidence>
<evidence type="ECO:0000250" key="2">
    <source>
        <dbReference type="UniProtKB" id="Q9D312"/>
    </source>
</evidence>
<evidence type="ECO:0000255" key="3"/>
<evidence type="ECO:0000255" key="4">
    <source>
        <dbReference type="PROSITE-ProRule" id="PRU01188"/>
    </source>
</evidence>
<evidence type="ECO:0000305" key="5"/>
<evidence type="ECO:0000312" key="6">
    <source>
        <dbReference type="EMBL" id="CAA23268.1"/>
    </source>
</evidence>